<comment type="function">
    <text evidence="1">This protein binds specifically to 23S rRNA.</text>
</comment>
<comment type="function">
    <text evidence="1">The globular domain of the protein is located near the polypeptide exit tunnel on the outside of the subunit, while an extended beta-hairpin is found that lines the wall of the exit tunnel in the center of the 70S ribosome.</text>
</comment>
<comment type="subunit">
    <text evidence="1">Part of the 50S ribosomal subunit.</text>
</comment>
<comment type="subcellular location">
    <subcellularLocation>
        <location>Plastid</location>
        <location>Chloroplast</location>
    </subcellularLocation>
</comment>
<comment type="similarity">
    <text evidence="2">Belongs to the universal ribosomal protein uL22 family.</text>
</comment>
<dbReference type="EMBL" id="AP009376">
    <property type="protein sequence ID" value="BAF50677.1"/>
    <property type="molecule type" value="Genomic_DNA"/>
</dbReference>
<dbReference type="RefSeq" id="YP_001123853.1">
    <property type="nucleotide sequence ID" value="NC_009275.1"/>
</dbReference>
<dbReference type="SMR" id="A4QLX2"/>
<dbReference type="GeneID" id="4962213"/>
<dbReference type="GO" id="GO:0009507">
    <property type="term" value="C:chloroplast"/>
    <property type="evidence" value="ECO:0007669"/>
    <property type="project" value="UniProtKB-SubCell"/>
</dbReference>
<dbReference type="GO" id="GO:0015934">
    <property type="term" value="C:large ribosomal subunit"/>
    <property type="evidence" value="ECO:0007669"/>
    <property type="project" value="InterPro"/>
</dbReference>
<dbReference type="GO" id="GO:0019843">
    <property type="term" value="F:rRNA binding"/>
    <property type="evidence" value="ECO:0007669"/>
    <property type="project" value="UniProtKB-UniRule"/>
</dbReference>
<dbReference type="GO" id="GO:0003735">
    <property type="term" value="F:structural constituent of ribosome"/>
    <property type="evidence" value="ECO:0007669"/>
    <property type="project" value="InterPro"/>
</dbReference>
<dbReference type="GO" id="GO:0006412">
    <property type="term" value="P:translation"/>
    <property type="evidence" value="ECO:0007669"/>
    <property type="project" value="UniProtKB-UniRule"/>
</dbReference>
<dbReference type="CDD" id="cd00336">
    <property type="entry name" value="Ribosomal_L22"/>
    <property type="match status" value="1"/>
</dbReference>
<dbReference type="FunFam" id="3.90.470.10:FF:000006">
    <property type="entry name" value="50S ribosomal protein L22, chloroplastic"/>
    <property type="match status" value="1"/>
</dbReference>
<dbReference type="Gene3D" id="3.90.470.10">
    <property type="entry name" value="Ribosomal protein L22/L17"/>
    <property type="match status" value="1"/>
</dbReference>
<dbReference type="HAMAP" id="MF_01331_B">
    <property type="entry name" value="Ribosomal_uL22_B"/>
    <property type="match status" value="1"/>
</dbReference>
<dbReference type="InterPro" id="IPR001063">
    <property type="entry name" value="Ribosomal_uL22"/>
</dbReference>
<dbReference type="InterPro" id="IPR005727">
    <property type="entry name" value="Ribosomal_uL22_bac/chlpt-type"/>
</dbReference>
<dbReference type="InterPro" id="IPR047867">
    <property type="entry name" value="Ribosomal_uL22_bac/org-type"/>
</dbReference>
<dbReference type="InterPro" id="IPR018260">
    <property type="entry name" value="Ribosomal_uL22_CS"/>
</dbReference>
<dbReference type="InterPro" id="IPR036394">
    <property type="entry name" value="Ribosomal_uL22_sf"/>
</dbReference>
<dbReference type="NCBIfam" id="TIGR01044">
    <property type="entry name" value="rplV_bact"/>
    <property type="match status" value="1"/>
</dbReference>
<dbReference type="PANTHER" id="PTHR13501">
    <property type="entry name" value="CHLOROPLAST 50S RIBOSOMAL PROTEIN L22-RELATED"/>
    <property type="match status" value="1"/>
</dbReference>
<dbReference type="PANTHER" id="PTHR13501:SF10">
    <property type="entry name" value="LARGE RIBOSOMAL SUBUNIT PROTEIN UL22M"/>
    <property type="match status" value="1"/>
</dbReference>
<dbReference type="Pfam" id="PF00237">
    <property type="entry name" value="Ribosomal_L22"/>
    <property type="match status" value="1"/>
</dbReference>
<dbReference type="SUPFAM" id="SSF54843">
    <property type="entry name" value="Ribosomal protein L22"/>
    <property type="match status" value="1"/>
</dbReference>
<dbReference type="PROSITE" id="PS00464">
    <property type="entry name" value="RIBOSOMAL_L22"/>
    <property type="match status" value="1"/>
</dbReference>
<keyword id="KW-0150">Chloroplast</keyword>
<keyword id="KW-0934">Plastid</keyword>
<keyword id="KW-0687">Ribonucleoprotein</keyword>
<keyword id="KW-0689">Ribosomal protein</keyword>
<keyword id="KW-0694">RNA-binding</keyword>
<keyword id="KW-0699">rRNA-binding</keyword>
<geneLocation type="chloroplast"/>
<name>RK22_NASOF</name>
<sequence length="160" mass="18504">MIKNRKKKSYTSVYALGQYISMSAHKARRVIDQIRGRSYEEALMILELMPYRGCYPIFKLVYSAAANASHNKGFKETNLVISKAEVNQGNTVKKLKPRARGRSYPIKRSTCHITIVLEDISFYQQYEEYLMYLKKPGCSNENRNLTCHDTYSSGGLWDKK</sequence>
<evidence type="ECO:0000250" key="1"/>
<evidence type="ECO:0000305" key="2"/>
<proteinExistence type="inferred from homology"/>
<feature type="chain" id="PRO_0000354584" description="Large ribosomal subunit protein uL22c">
    <location>
        <begin position="1"/>
        <end position="160"/>
    </location>
</feature>
<organism>
    <name type="scientific">Nasturtium officinale</name>
    <name type="common">Watercress</name>
    <name type="synonym">Rorippa nasturtium-aquaticum</name>
    <dbReference type="NCBI Taxonomy" id="65948"/>
    <lineage>
        <taxon>Eukaryota</taxon>
        <taxon>Viridiplantae</taxon>
        <taxon>Streptophyta</taxon>
        <taxon>Embryophyta</taxon>
        <taxon>Tracheophyta</taxon>
        <taxon>Spermatophyta</taxon>
        <taxon>Magnoliopsida</taxon>
        <taxon>eudicotyledons</taxon>
        <taxon>Gunneridae</taxon>
        <taxon>Pentapetalae</taxon>
        <taxon>rosids</taxon>
        <taxon>malvids</taxon>
        <taxon>Brassicales</taxon>
        <taxon>Brassicaceae</taxon>
        <taxon>Cardamineae</taxon>
        <taxon>Nasturtium</taxon>
    </lineage>
</organism>
<protein>
    <recommendedName>
        <fullName evidence="2">Large ribosomal subunit protein uL22c</fullName>
    </recommendedName>
    <alternativeName>
        <fullName>50S ribosomal protein L22, chloroplastic</fullName>
    </alternativeName>
</protein>
<gene>
    <name type="primary">rpl22</name>
</gene>
<reference key="1">
    <citation type="submission" date="2007-03" db="EMBL/GenBank/DDBJ databases">
        <title>Sequencing analysis of Nasturtium officinale chloroplast DNA.</title>
        <authorList>
            <person name="Hosouchi T."/>
            <person name="Tsuruoka H."/>
            <person name="Kotani H."/>
        </authorList>
    </citation>
    <scope>NUCLEOTIDE SEQUENCE [LARGE SCALE GENOMIC DNA]</scope>
</reference>
<accession>A4QLX2</accession>